<organism>
    <name type="scientific">Cytophaga hutchinsonii (strain ATCC 33406 / DSM 1761 / CIP 103989 / NBRC 15051 / NCIMB 9469 / D465)</name>
    <dbReference type="NCBI Taxonomy" id="269798"/>
    <lineage>
        <taxon>Bacteria</taxon>
        <taxon>Pseudomonadati</taxon>
        <taxon>Bacteroidota</taxon>
        <taxon>Cytophagia</taxon>
        <taxon>Cytophagales</taxon>
        <taxon>Cytophagaceae</taxon>
        <taxon>Cytophaga</taxon>
    </lineage>
</organism>
<dbReference type="EMBL" id="CP000383">
    <property type="protein sequence ID" value="ABG60405.1"/>
    <property type="molecule type" value="Genomic_DNA"/>
</dbReference>
<dbReference type="RefSeq" id="WP_011586514.1">
    <property type="nucleotide sequence ID" value="NZ_FPJX01000011.1"/>
</dbReference>
<dbReference type="SMR" id="Q11QA9"/>
<dbReference type="STRING" id="269798.CHU_3165"/>
<dbReference type="KEGG" id="chu:CHU_3165"/>
<dbReference type="eggNOG" id="COG0049">
    <property type="taxonomic scope" value="Bacteria"/>
</dbReference>
<dbReference type="HOGENOM" id="CLU_072226_1_1_10"/>
<dbReference type="OrthoDB" id="9807653at2"/>
<dbReference type="Proteomes" id="UP000001822">
    <property type="component" value="Chromosome"/>
</dbReference>
<dbReference type="GO" id="GO:0015935">
    <property type="term" value="C:small ribosomal subunit"/>
    <property type="evidence" value="ECO:0007669"/>
    <property type="project" value="InterPro"/>
</dbReference>
<dbReference type="GO" id="GO:0019843">
    <property type="term" value="F:rRNA binding"/>
    <property type="evidence" value="ECO:0007669"/>
    <property type="project" value="UniProtKB-UniRule"/>
</dbReference>
<dbReference type="GO" id="GO:0003735">
    <property type="term" value="F:structural constituent of ribosome"/>
    <property type="evidence" value="ECO:0007669"/>
    <property type="project" value="InterPro"/>
</dbReference>
<dbReference type="GO" id="GO:0000049">
    <property type="term" value="F:tRNA binding"/>
    <property type="evidence" value="ECO:0007669"/>
    <property type="project" value="UniProtKB-UniRule"/>
</dbReference>
<dbReference type="GO" id="GO:0006412">
    <property type="term" value="P:translation"/>
    <property type="evidence" value="ECO:0007669"/>
    <property type="project" value="UniProtKB-UniRule"/>
</dbReference>
<dbReference type="CDD" id="cd14869">
    <property type="entry name" value="uS7_Bacteria"/>
    <property type="match status" value="1"/>
</dbReference>
<dbReference type="FunFam" id="1.10.455.10:FF:000001">
    <property type="entry name" value="30S ribosomal protein S7"/>
    <property type="match status" value="1"/>
</dbReference>
<dbReference type="Gene3D" id="1.10.455.10">
    <property type="entry name" value="Ribosomal protein S7 domain"/>
    <property type="match status" value="1"/>
</dbReference>
<dbReference type="HAMAP" id="MF_00480_B">
    <property type="entry name" value="Ribosomal_uS7_B"/>
    <property type="match status" value="1"/>
</dbReference>
<dbReference type="InterPro" id="IPR000235">
    <property type="entry name" value="Ribosomal_uS7"/>
</dbReference>
<dbReference type="InterPro" id="IPR005717">
    <property type="entry name" value="Ribosomal_uS7_bac/org-type"/>
</dbReference>
<dbReference type="InterPro" id="IPR020606">
    <property type="entry name" value="Ribosomal_uS7_CS"/>
</dbReference>
<dbReference type="InterPro" id="IPR023798">
    <property type="entry name" value="Ribosomal_uS7_dom"/>
</dbReference>
<dbReference type="InterPro" id="IPR036823">
    <property type="entry name" value="Ribosomal_uS7_dom_sf"/>
</dbReference>
<dbReference type="NCBIfam" id="TIGR01029">
    <property type="entry name" value="rpsG_bact"/>
    <property type="match status" value="1"/>
</dbReference>
<dbReference type="PANTHER" id="PTHR11205">
    <property type="entry name" value="RIBOSOMAL PROTEIN S7"/>
    <property type="match status" value="1"/>
</dbReference>
<dbReference type="Pfam" id="PF00177">
    <property type="entry name" value="Ribosomal_S7"/>
    <property type="match status" value="1"/>
</dbReference>
<dbReference type="PIRSF" id="PIRSF002122">
    <property type="entry name" value="RPS7p_RPS7a_RPS5e_RPS7o"/>
    <property type="match status" value="1"/>
</dbReference>
<dbReference type="SUPFAM" id="SSF47973">
    <property type="entry name" value="Ribosomal protein S7"/>
    <property type="match status" value="1"/>
</dbReference>
<dbReference type="PROSITE" id="PS00052">
    <property type="entry name" value="RIBOSOMAL_S7"/>
    <property type="match status" value="1"/>
</dbReference>
<accession>Q11QA9</accession>
<keyword id="KW-1185">Reference proteome</keyword>
<keyword id="KW-0687">Ribonucleoprotein</keyword>
<keyword id="KW-0689">Ribosomal protein</keyword>
<keyword id="KW-0694">RNA-binding</keyword>
<keyword id="KW-0699">rRNA-binding</keyword>
<keyword id="KW-0820">tRNA-binding</keyword>
<protein>
    <recommendedName>
        <fullName evidence="1">Small ribosomal subunit protein uS7</fullName>
    </recommendedName>
    <alternativeName>
        <fullName evidence="2">30S ribosomal protein S7</fullName>
    </alternativeName>
</protein>
<feature type="chain" id="PRO_0000344292" description="Small ribosomal subunit protein uS7">
    <location>
        <begin position="1"/>
        <end position="155"/>
    </location>
</feature>
<name>RS7_CYTH3</name>
<reference key="1">
    <citation type="journal article" date="2007" name="Appl. Environ. Microbiol.">
        <title>Genome sequence of the cellulolytic gliding bacterium Cytophaga hutchinsonii.</title>
        <authorList>
            <person name="Xie G."/>
            <person name="Bruce D.C."/>
            <person name="Challacombe J.F."/>
            <person name="Chertkov O."/>
            <person name="Detter J.C."/>
            <person name="Gilna P."/>
            <person name="Han C.S."/>
            <person name="Lucas S."/>
            <person name="Misra M."/>
            <person name="Myers G.L."/>
            <person name="Richardson P."/>
            <person name="Tapia R."/>
            <person name="Thayer N."/>
            <person name="Thompson L.S."/>
            <person name="Brettin T.S."/>
            <person name="Henrissat B."/>
            <person name="Wilson D.B."/>
            <person name="McBride M.J."/>
        </authorList>
    </citation>
    <scope>NUCLEOTIDE SEQUENCE [LARGE SCALE GENOMIC DNA]</scope>
    <source>
        <strain>ATCC 33406 / DSM 1761 / JCM 20678 / CIP 103989 / IAM 12607 / NBRC 15051 / NCIMB 9469 / D465</strain>
    </source>
</reference>
<proteinExistence type="inferred from homology"/>
<evidence type="ECO:0000255" key="1">
    <source>
        <dbReference type="HAMAP-Rule" id="MF_00480"/>
    </source>
</evidence>
<evidence type="ECO:0000305" key="2"/>
<sequence length="155" mass="17568">MRKAKPKKRYLLPDPKFSDTMVTKFVNSLMYDGKKSTAYSIFYDAVALVEKKTSESGLEVWKKALNNVSPQVEVRSRRVGGSTFQVPTEVRPDRKMALGMKWLINYARSRGEKTMTDKLAGEIISASKGEGAAVKKRDDVHRMAEANKAFSHFRF</sequence>
<comment type="function">
    <text evidence="1">One of the primary rRNA binding proteins, it binds directly to 16S rRNA where it nucleates assembly of the head domain of the 30S subunit. Is located at the subunit interface close to the decoding center, probably blocks exit of the E-site tRNA.</text>
</comment>
<comment type="subunit">
    <text evidence="1">Part of the 30S ribosomal subunit. Contacts proteins S9 and S11.</text>
</comment>
<comment type="similarity">
    <text evidence="1">Belongs to the universal ribosomal protein uS7 family.</text>
</comment>
<gene>
    <name evidence="1" type="primary">rpsG</name>
    <name type="ordered locus">CHU_3165</name>
</gene>